<dbReference type="EC" id="1.17.1.8" evidence="1"/>
<dbReference type="EMBL" id="CP000247">
    <property type="protein sequence ID" value="ABG68071.1"/>
    <property type="molecule type" value="Genomic_DNA"/>
</dbReference>
<dbReference type="RefSeq" id="WP_000543585.1">
    <property type="nucleotide sequence ID" value="NC_008253.1"/>
</dbReference>
<dbReference type="SMR" id="Q0TLW0"/>
<dbReference type="KEGG" id="ecp:ECP_0029"/>
<dbReference type="HOGENOM" id="CLU_047479_2_1_6"/>
<dbReference type="UniPathway" id="UPA00034">
    <property type="reaction ID" value="UER00018"/>
</dbReference>
<dbReference type="Proteomes" id="UP000009182">
    <property type="component" value="Chromosome"/>
</dbReference>
<dbReference type="GO" id="GO:0005829">
    <property type="term" value="C:cytosol"/>
    <property type="evidence" value="ECO:0007669"/>
    <property type="project" value="TreeGrafter"/>
</dbReference>
<dbReference type="GO" id="GO:0008839">
    <property type="term" value="F:4-hydroxy-tetrahydrodipicolinate reductase"/>
    <property type="evidence" value="ECO:0007669"/>
    <property type="project" value="UniProtKB-EC"/>
</dbReference>
<dbReference type="GO" id="GO:0051287">
    <property type="term" value="F:NAD binding"/>
    <property type="evidence" value="ECO:0007669"/>
    <property type="project" value="UniProtKB-UniRule"/>
</dbReference>
<dbReference type="GO" id="GO:0050661">
    <property type="term" value="F:NADP binding"/>
    <property type="evidence" value="ECO:0007669"/>
    <property type="project" value="UniProtKB-UniRule"/>
</dbReference>
<dbReference type="GO" id="GO:0016726">
    <property type="term" value="F:oxidoreductase activity, acting on CH or CH2 groups, NAD or NADP as acceptor"/>
    <property type="evidence" value="ECO:0007669"/>
    <property type="project" value="UniProtKB-UniRule"/>
</dbReference>
<dbReference type="GO" id="GO:0019877">
    <property type="term" value="P:diaminopimelate biosynthetic process"/>
    <property type="evidence" value="ECO:0007669"/>
    <property type="project" value="UniProtKB-UniRule"/>
</dbReference>
<dbReference type="GO" id="GO:0009089">
    <property type="term" value="P:lysine biosynthetic process via diaminopimelate"/>
    <property type="evidence" value="ECO:0007669"/>
    <property type="project" value="UniProtKB-UniRule"/>
</dbReference>
<dbReference type="CDD" id="cd02274">
    <property type="entry name" value="DHDPR_N"/>
    <property type="match status" value="1"/>
</dbReference>
<dbReference type="FunFam" id="3.30.360.10:FF:000004">
    <property type="entry name" value="4-hydroxy-tetrahydrodipicolinate reductase"/>
    <property type="match status" value="1"/>
</dbReference>
<dbReference type="FunFam" id="3.40.50.720:FF:000048">
    <property type="entry name" value="4-hydroxy-tetrahydrodipicolinate reductase"/>
    <property type="match status" value="1"/>
</dbReference>
<dbReference type="Gene3D" id="3.30.360.10">
    <property type="entry name" value="Dihydrodipicolinate Reductase, domain 2"/>
    <property type="match status" value="1"/>
</dbReference>
<dbReference type="Gene3D" id="3.40.50.720">
    <property type="entry name" value="NAD(P)-binding Rossmann-like Domain"/>
    <property type="match status" value="1"/>
</dbReference>
<dbReference type="HAMAP" id="MF_00102">
    <property type="entry name" value="DapB"/>
    <property type="match status" value="1"/>
</dbReference>
<dbReference type="InterPro" id="IPR022663">
    <property type="entry name" value="DapB_C"/>
</dbReference>
<dbReference type="InterPro" id="IPR000846">
    <property type="entry name" value="DapB_N"/>
</dbReference>
<dbReference type="InterPro" id="IPR022664">
    <property type="entry name" value="DapB_N_CS"/>
</dbReference>
<dbReference type="InterPro" id="IPR023940">
    <property type="entry name" value="DHDPR_bac"/>
</dbReference>
<dbReference type="InterPro" id="IPR036291">
    <property type="entry name" value="NAD(P)-bd_dom_sf"/>
</dbReference>
<dbReference type="NCBIfam" id="TIGR00036">
    <property type="entry name" value="dapB"/>
    <property type="match status" value="1"/>
</dbReference>
<dbReference type="PANTHER" id="PTHR20836:SF0">
    <property type="entry name" value="4-HYDROXY-TETRAHYDRODIPICOLINATE REDUCTASE 1, CHLOROPLASTIC-RELATED"/>
    <property type="match status" value="1"/>
</dbReference>
<dbReference type="PANTHER" id="PTHR20836">
    <property type="entry name" value="DIHYDRODIPICOLINATE REDUCTASE"/>
    <property type="match status" value="1"/>
</dbReference>
<dbReference type="Pfam" id="PF05173">
    <property type="entry name" value="DapB_C"/>
    <property type="match status" value="1"/>
</dbReference>
<dbReference type="Pfam" id="PF01113">
    <property type="entry name" value="DapB_N"/>
    <property type="match status" value="1"/>
</dbReference>
<dbReference type="PIRSF" id="PIRSF000161">
    <property type="entry name" value="DHPR"/>
    <property type="match status" value="1"/>
</dbReference>
<dbReference type="SUPFAM" id="SSF55347">
    <property type="entry name" value="Glyceraldehyde-3-phosphate dehydrogenase-like, C-terminal domain"/>
    <property type="match status" value="1"/>
</dbReference>
<dbReference type="SUPFAM" id="SSF51735">
    <property type="entry name" value="NAD(P)-binding Rossmann-fold domains"/>
    <property type="match status" value="1"/>
</dbReference>
<dbReference type="PROSITE" id="PS01298">
    <property type="entry name" value="DAPB"/>
    <property type="match status" value="1"/>
</dbReference>
<feature type="chain" id="PRO_1000008562" description="4-hydroxy-tetrahydrodipicolinate reductase">
    <location>
        <begin position="1"/>
        <end position="273"/>
    </location>
</feature>
<feature type="active site" description="Proton donor/acceptor" evidence="1">
    <location>
        <position position="159"/>
    </location>
</feature>
<feature type="active site" description="Proton donor" evidence="1">
    <location>
        <position position="163"/>
    </location>
</feature>
<feature type="binding site" evidence="1">
    <location>
        <begin position="12"/>
        <end position="17"/>
    </location>
    <ligand>
        <name>NAD(+)</name>
        <dbReference type="ChEBI" id="CHEBI:57540"/>
    </ligand>
</feature>
<feature type="binding site" evidence="1">
    <location>
        <position position="38"/>
    </location>
    <ligand>
        <name>NAD(+)</name>
        <dbReference type="ChEBI" id="CHEBI:57540"/>
    </ligand>
</feature>
<feature type="binding site" evidence="1">
    <location>
        <position position="39"/>
    </location>
    <ligand>
        <name>NADP(+)</name>
        <dbReference type="ChEBI" id="CHEBI:58349"/>
    </ligand>
</feature>
<feature type="binding site" evidence="1">
    <location>
        <begin position="102"/>
        <end position="104"/>
    </location>
    <ligand>
        <name>NAD(+)</name>
        <dbReference type="ChEBI" id="CHEBI:57540"/>
    </ligand>
</feature>
<feature type="binding site" evidence="1">
    <location>
        <begin position="126"/>
        <end position="129"/>
    </location>
    <ligand>
        <name>NAD(+)</name>
        <dbReference type="ChEBI" id="CHEBI:57540"/>
    </ligand>
</feature>
<feature type="binding site" evidence="1">
    <location>
        <position position="160"/>
    </location>
    <ligand>
        <name>(S)-2,3,4,5-tetrahydrodipicolinate</name>
        <dbReference type="ChEBI" id="CHEBI:16845"/>
    </ligand>
</feature>
<feature type="binding site" evidence="1">
    <location>
        <begin position="169"/>
        <end position="170"/>
    </location>
    <ligand>
        <name>(S)-2,3,4,5-tetrahydrodipicolinate</name>
        <dbReference type="ChEBI" id="CHEBI:16845"/>
    </ligand>
</feature>
<gene>
    <name evidence="1" type="primary">dapB</name>
    <name type="ordered locus">ECP_0029</name>
</gene>
<comment type="function">
    <text evidence="1">Catalyzes the conversion of 4-hydroxy-tetrahydrodipicolinate (HTPA) to tetrahydrodipicolinate.</text>
</comment>
<comment type="catalytic activity">
    <reaction evidence="1">
        <text>(S)-2,3,4,5-tetrahydrodipicolinate + NAD(+) + H2O = (2S,4S)-4-hydroxy-2,3,4,5-tetrahydrodipicolinate + NADH + H(+)</text>
        <dbReference type="Rhea" id="RHEA:35323"/>
        <dbReference type="ChEBI" id="CHEBI:15377"/>
        <dbReference type="ChEBI" id="CHEBI:15378"/>
        <dbReference type="ChEBI" id="CHEBI:16845"/>
        <dbReference type="ChEBI" id="CHEBI:57540"/>
        <dbReference type="ChEBI" id="CHEBI:57945"/>
        <dbReference type="ChEBI" id="CHEBI:67139"/>
        <dbReference type="EC" id="1.17.1.8"/>
    </reaction>
</comment>
<comment type="catalytic activity">
    <reaction evidence="1">
        <text>(S)-2,3,4,5-tetrahydrodipicolinate + NADP(+) + H2O = (2S,4S)-4-hydroxy-2,3,4,5-tetrahydrodipicolinate + NADPH + H(+)</text>
        <dbReference type="Rhea" id="RHEA:35331"/>
        <dbReference type="ChEBI" id="CHEBI:15377"/>
        <dbReference type="ChEBI" id="CHEBI:15378"/>
        <dbReference type="ChEBI" id="CHEBI:16845"/>
        <dbReference type="ChEBI" id="CHEBI:57783"/>
        <dbReference type="ChEBI" id="CHEBI:58349"/>
        <dbReference type="ChEBI" id="CHEBI:67139"/>
        <dbReference type="EC" id="1.17.1.8"/>
    </reaction>
</comment>
<comment type="pathway">
    <text evidence="1">Amino-acid biosynthesis; L-lysine biosynthesis via DAP pathway; (S)-tetrahydrodipicolinate from L-aspartate: step 4/4.</text>
</comment>
<comment type="subunit">
    <text evidence="1">Homotetramer.</text>
</comment>
<comment type="subcellular location">
    <subcellularLocation>
        <location evidence="1">Cytoplasm</location>
    </subcellularLocation>
</comment>
<comment type="similarity">
    <text evidence="1">Belongs to the DapB family.</text>
</comment>
<comment type="caution">
    <text evidence="2">Was originally thought to be a dihydrodipicolinate reductase (DHDPR), catalyzing the conversion of dihydrodipicolinate to tetrahydrodipicolinate. However, it was shown in E.coli that the substrate of the enzymatic reaction is not dihydrodipicolinate (DHDP) but in fact (2S,4S)-4-hydroxy-2,3,4,5-tetrahydrodipicolinic acid (HTPA), the product released by the DapA-catalyzed reaction.</text>
</comment>
<accession>Q0TLW0</accession>
<reference key="1">
    <citation type="journal article" date="2006" name="Mol. Microbiol.">
        <title>Role of pathogenicity island-associated integrases in the genome plasticity of uropathogenic Escherichia coli strain 536.</title>
        <authorList>
            <person name="Hochhut B."/>
            <person name="Wilde C."/>
            <person name="Balling G."/>
            <person name="Middendorf B."/>
            <person name="Dobrindt U."/>
            <person name="Brzuszkiewicz E."/>
            <person name="Gottschalk G."/>
            <person name="Carniel E."/>
            <person name="Hacker J."/>
        </authorList>
    </citation>
    <scope>NUCLEOTIDE SEQUENCE [LARGE SCALE GENOMIC DNA]</scope>
    <source>
        <strain>536 / UPEC</strain>
    </source>
</reference>
<protein>
    <recommendedName>
        <fullName evidence="1">4-hydroxy-tetrahydrodipicolinate reductase</fullName>
        <shortName evidence="1">HTPA reductase</shortName>
        <ecNumber evidence="1">1.17.1.8</ecNumber>
    </recommendedName>
</protein>
<organism>
    <name type="scientific">Escherichia coli O6:K15:H31 (strain 536 / UPEC)</name>
    <dbReference type="NCBI Taxonomy" id="362663"/>
    <lineage>
        <taxon>Bacteria</taxon>
        <taxon>Pseudomonadati</taxon>
        <taxon>Pseudomonadota</taxon>
        <taxon>Gammaproteobacteria</taxon>
        <taxon>Enterobacterales</taxon>
        <taxon>Enterobacteriaceae</taxon>
        <taxon>Escherichia</taxon>
    </lineage>
</organism>
<evidence type="ECO:0000255" key="1">
    <source>
        <dbReference type="HAMAP-Rule" id="MF_00102"/>
    </source>
</evidence>
<evidence type="ECO:0000305" key="2"/>
<keyword id="KW-0028">Amino-acid biosynthesis</keyword>
<keyword id="KW-0963">Cytoplasm</keyword>
<keyword id="KW-0220">Diaminopimelate biosynthesis</keyword>
<keyword id="KW-0457">Lysine biosynthesis</keyword>
<keyword id="KW-0520">NAD</keyword>
<keyword id="KW-0521">NADP</keyword>
<keyword id="KW-0560">Oxidoreductase</keyword>
<name>DAPB_ECOL5</name>
<proteinExistence type="inferred from homology"/>
<sequence length="273" mass="28771">MHDANIRVAIAGAGGRMGRQLIQAALALEGVQLGAALEREGSSLLGSDAGELAGAGKTGVTVQSSLDAIKDDFDVFIDFTRPEGTLNHLAFCRQHGKGMVIGTTGFDEAGKQAIRDAAADIAIVFAANFSVGVNVMLKLLEKAAKVMGDYTDIEIIEAHHRHKVDAPSGTALAMGEAIAHALDKDLKDCAVYSREGHTGERVPGTIGFATVRAGDIVGEHTAMFADIGERLEITHKASSRMTFANGAVRSALWLSGKESGLFDMRDVLDLNNL</sequence>